<organism>
    <name type="scientific">Rattus norvegicus</name>
    <name type="common">Rat</name>
    <dbReference type="NCBI Taxonomy" id="10116"/>
    <lineage>
        <taxon>Eukaryota</taxon>
        <taxon>Metazoa</taxon>
        <taxon>Chordata</taxon>
        <taxon>Craniata</taxon>
        <taxon>Vertebrata</taxon>
        <taxon>Euteleostomi</taxon>
        <taxon>Mammalia</taxon>
        <taxon>Eutheria</taxon>
        <taxon>Euarchontoglires</taxon>
        <taxon>Glires</taxon>
        <taxon>Rodentia</taxon>
        <taxon>Myomorpha</taxon>
        <taxon>Muroidea</taxon>
        <taxon>Muridae</taxon>
        <taxon>Murinae</taxon>
        <taxon>Rattus</taxon>
    </lineage>
</organism>
<keyword id="KW-0090">Biological rhythms</keyword>
<keyword id="KW-0156">Chromatin regulator</keyword>
<keyword id="KW-0158">Chromosome</keyword>
<keyword id="KW-0963">Cytoplasm</keyword>
<keyword id="KW-0378">Hydrolase</keyword>
<keyword id="KW-0479">Metal-binding</keyword>
<keyword id="KW-0539">Nucleus</keyword>
<keyword id="KW-0597">Phosphoprotein</keyword>
<keyword id="KW-1185">Reference proteome</keyword>
<keyword id="KW-0678">Repressor</keyword>
<keyword id="KW-0804">Transcription</keyword>
<keyword id="KW-0805">Transcription regulation</keyword>
<keyword id="KW-0832">Ubl conjugation</keyword>
<keyword id="KW-0862">Zinc</keyword>
<accession>Q6P6W3</accession>
<accession>Q99PA0</accession>
<feature type="chain" id="PRO_0000281030" description="Histone deacetylase 3">
    <location>
        <begin position="1"/>
        <end position="428"/>
    </location>
</feature>
<feature type="region of interest" description="Histone deacetylase">
    <location>
        <begin position="3"/>
        <end position="316"/>
    </location>
</feature>
<feature type="region of interest" description="Disordered" evidence="4">
    <location>
        <begin position="388"/>
        <end position="428"/>
    </location>
</feature>
<feature type="compositionally biased region" description="Basic and acidic residues" evidence="4">
    <location>
        <begin position="388"/>
        <end position="405"/>
    </location>
</feature>
<feature type="compositionally biased region" description="Basic and acidic residues" evidence="4">
    <location>
        <begin position="415"/>
        <end position="428"/>
    </location>
</feature>
<feature type="active site" evidence="3">
    <location>
        <position position="135"/>
    </location>
</feature>
<feature type="binding site" evidence="1">
    <location>
        <position position="17"/>
    </location>
    <ligand>
        <name>1D-myo-inositol 1,4,5,6-tetrakisphosphate</name>
        <dbReference type="ChEBI" id="CHEBI:57627"/>
    </ligand>
</feature>
<feature type="binding site" evidence="1">
    <location>
        <position position="21"/>
    </location>
    <ligand>
        <name>1D-myo-inositol 1,4,5,6-tetrakisphosphate</name>
        <dbReference type="ChEBI" id="CHEBI:57627"/>
    </ligand>
</feature>
<feature type="binding site" evidence="1">
    <location>
        <position position="25"/>
    </location>
    <ligand>
        <name>1D-myo-inositol 1,4,5,6-tetrakisphosphate</name>
        <dbReference type="ChEBI" id="CHEBI:57627"/>
    </ligand>
</feature>
<feature type="binding site" evidence="1">
    <location>
        <position position="170"/>
    </location>
    <ligand>
        <name>Zn(2+)</name>
        <dbReference type="ChEBI" id="CHEBI:29105"/>
    </ligand>
</feature>
<feature type="binding site" evidence="1">
    <location>
        <position position="172"/>
    </location>
    <ligand>
        <name>Zn(2+)</name>
        <dbReference type="ChEBI" id="CHEBI:29105"/>
    </ligand>
</feature>
<feature type="binding site" evidence="1">
    <location>
        <position position="259"/>
    </location>
    <ligand>
        <name>Zn(2+)</name>
        <dbReference type="ChEBI" id="CHEBI:29105"/>
    </ligand>
</feature>
<feature type="binding site" evidence="1">
    <location>
        <position position="265"/>
    </location>
    <ligand>
        <name>1D-myo-inositol 1,4,5,6-tetrakisphosphate</name>
        <dbReference type="ChEBI" id="CHEBI:57627"/>
    </ligand>
</feature>
<feature type="modified residue" description="Phosphoserine" evidence="7">
    <location>
        <position position="424"/>
    </location>
</feature>
<protein>
    <recommendedName>
        <fullName>Histone deacetylase 3</fullName>
        <shortName>HD3</shortName>
        <ecNumber evidence="1">3.5.1.98</ecNumber>
    </recommendedName>
    <alternativeName>
        <fullName>Protein deacetylase HDAC3</fullName>
        <ecNumber evidence="1">3.5.1.-</ecNumber>
    </alternativeName>
    <alternativeName>
        <fullName>Protein deacylase HDAC3</fullName>
        <ecNumber evidence="1">3.5.1.-</ecNumber>
    </alternativeName>
</protein>
<proteinExistence type="evidence at protein level"/>
<gene>
    <name type="primary">Hdac3</name>
</gene>
<name>HDAC3_RAT</name>
<sequence>MAKTVAYFYDPDVGNFHYGAGHPMKPHRLALTHSLVLHYGLYKKMIVFKPYQASQHDMCRFHSEDYIDFLQRVSPTNMQGFTKSLNAFNVGDDCPVFPGLFEFCSRYTGASLQGATQLNNKICDIAINWAGGLHHAKKFEASGFCYVNDIVIGILELLKYHPRVLYIDIDIHHGDGVQEAFYLTDRVMTVSFHKYGNYFFPGTGDMYEVGAESGRYYCLNVPLRDGIDDQSYKHLFQPVISQVVDFYQPTCIVLQCGADSLGCDRLGCFNLSIRGHGECVEYVKSFNIPLLVLGGGGYTVRNVARCWTYETSLLVEEAISEELPYSEYFEYFAPDFTLHPDVSTRIENQNSRQYLDQIRQTIFENLKMLNHAPSVQIHDVPADLLTYDRTDEADAEERGPEENYSRPEAPNEFYDGDHDNDKESDVEI</sequence>
<dbReference type="EC" id="3.5.1.98" evidence="1"/>
<dbReference type="EC" id="3.5.1.-" evidence="1"/>
<dbReference type="EMBL" id="AF321131">
    <property type="protein sequence ID" value="AAK11184.1"/>
    <property type="molecule type" value="mRNA"/>
</dbReference>
<dbReference type="EMBL" id="BC061988">
    <property type="protein sequence ID" value="AAH61988.1"/>
    <property type="molecule type" value="mRNA"/>
</dbReference>
<dbReference type="RefSeq" id="NP_445900.2">
    <property type="nucleotide sequence ID" value="NM_053448.2"/>
</dbReference>
<dbReference type="SMR" id="Q6P6W3"/>
<dbReference type="BioGRID" id="250009">
    <property type="interactions" value="2"/>
</dbReference>
<dbReference type="FunCoup" id="Q6P6W3">
    <property type="interactions" value="1806"/>
</dbReference>
<dbReference type="IntAct" id="Q6P6W3">
    <property type="interactions" value="1"/>
</dbReference>
<dbReference type="MINT" id="Q6P6W3"/>
<dbReference type="STRING" id="10116.ENSRNOP00000071791"/>
<dbReference type="BindingDB" id="Q6P6W3"/>
<dbReference type="ChEMBL" id="CHEMBL2095943"/>
<dbReference type="DrugCentral" id="Q6P6W3"/>
<dbReference type="iPTMnet" id="Q6P6W3"/>
<dbReference type="PhosphoSitePlus" id="Q6P6W3"/>
<dbReference type="PaxDb" id="10116-ENSRNOP00000057161"/>
<dbReference type="GeneID" id="84578"/>
<dbReference type="KEGG" id="rno:84578"/>
<dbReference type="UCSC" id="RGD:619977">
    <property type="organism name" value="rat"/>
</dbReference>
<dbReference type="AGR" id="RGD:619977"/>
<dbReference type="CTD" id="8841"/>
<dbReference type="RGD" id="619977">
    <property type="gene designation" value="Hdac3"/>
</dbReference>
<dbReference type="eggNOG" id="KOG1342">
    <property type="taxonomic scope" value="Eukaryota"/>
</dbReference>
<dbReference type="InParanoid" id="Q6P6W3"/>
<dbReference type="OrthoDB" id="1918432at2759"/>
<dbReference type="PhylomeDB" id="Q6P6W3"/>
<dbReference type="Reactome" id="R-RNO-350054">
    <property type="pathway name" value="Notch-HLH transcription pathway"/>
</dbReference>
<dbReference type="Reactome" id="R-RNO-381340">
    <property type="pathway name" value="Transcriptional regulation of white adipocyte differentiation"/>
</dbReference>
<dbReference type="Reactome" id="R-RNO-400206">
    <property type="pathway name" value="Regulation of lipid metabolism by PPARalpha"/>
</dbReference>
<dbReference type="Reactome" id="R-RNO-9029569">
    <property type="pathway name" value="NR1H3 &amp; NR1H2 regulate gene expression linked to cholesterol transport and efflux"/>
</dbReference>
<dbReference type="Reactome" id="R-RNO-9701898">
    <property type="pathway name" value="STAT3 nuclear events downstream of ALK signaling"/>
</dbReference>
<dbReference type="Reactome" id="R-RNO-9707564">
    <property type="pathway name" value="Cytoprotection by HMOX1"/>
</dbReference>
<dbReference type="Reactome" id="R-RNO-9841922">
    <property type="pathway name" value="MLL4 and MLL3 complexes regulate expression of PPARG target genes in adipogenesis and hepatic steatosis"/>
</dbReference>
<dbReference type="PRO" id="PR:Q6P6W3"/>
<dbReference type="Proteomes" id="UP000002494">
    <property type="component" value="Unplaced"/>
</dbReference>
<dbReference type="GO" id="GO:0000785">
    <property type="term" value="C:chromatin"/>
    <property type="evidence" value="ECO:0000314"/>
    <property type="project" value="RGD"/>
</dbReference>
<dbReference type="GO" id="GO:0005737">
    <property type="term" value="C:cytoplasm"/>
    <property type="evidence" value="ECO:0000266"/>
    <property type="project" value="RGD"/>
</dbReference>
<dbReference type="GO" id="GO:0005829">
    <property type="term" value="C:cytosol"/>
    <property type="evidence" value="ECO:0000250"/>
    <property type="project" value="UniProtKB"/>
</dbReference>
<dbReference type="GO" id="GO:0005794">
    <property type="term" value="C:Golgi apparatus"/>
    <property type="evidence" value="ECO:0007669"/>
    <property type="project" value="Ensembl"/>
</dbReference>
<dbReference type="GO" id="GO:0000118">
    <property type="term" value="C:histone deacetylase complex"/>
    <property type="evidence" value="ECO:0000266"/>
    <property type="project" value="RGD"/>
</dbReference>
<dbReference type="GO" id="GO:0072686">
    <property type="term" value="C:mitotic spindle"/>
    <property type="evidence" value="ECO:0000266"/>
    <property type="project" value="RGD"/>
</dbReference>
<dbReference type="GO" id="GO:0005654">
    <property type="term" value="C:nucleoplasm"/>
    <property type="evidence" value="ECO:0000304"/>
    <property type="project" value="Reactome"/>
</dbReference>
<dbReference type="GO" id="GO:0005634">
    <property type="term" value="C:nucleus"/>
    <property type="evidence" value="ECO:0000314"/>
    <property type="project" value="RGD"/>
</dbReference>
<dbReference type="GO" id="GO:0005886">
    <property type="term" value="C:plasma membrane"/>
    <property type="evidence" value="ECO:0007669"/>
    <property type="project" value="Ensembl"/>
</dbReference>
<dbReference type="GO" id="GO:0017053">
    <property type="term" value="C:transcription repressor complex"/>
    <property type="evidence" value="ECO:0000250"/>
    <property type="project" value="UniProtKB"/>
</dbReference>
<dbReference type="GO" id="GO:0003682">
    <property type="term" value="F:chromatin binding"/>
    <property type="evidence" value="ECO:0000315"/>
    <property type="project" value="RGD"/>
</dbReference>
<dbReference type="GO" id="GO:0031490">
    <property type="term" value="F:chromatin DNA binding"/>
    <property type="evidence" value="ECO:0000266"/>
    <property type="project" value="RGD"/>
</dbReference>
<dbReference type="GO" id="GO:0030332">
    <property type="term" value="F:cyclin binding"/>
    <property type="evidence" value="ECO:0000266"/>
    <property type="project" value="RGD"/>
</dbReference>
<dbReference type="GO" id="GO:0019213">
    <property type="term" value="F:deacetylase activity"/>
    <property type="evidence" value="ECO:0000314"/>
    <property type="project" value="RGD"/>
</dbReference>
<dbReference type="GO" id="GO:0003677">
    <property type="term" value="F:DNA binding"/>
    <property type="evidence" value="ECO:0000266"/>
    <property type="project" value="RGD"/>
</dbReference>
<dbReference type="GO" id="GO:0019899">
    <property type="term" value="F:enzyme binding"/>
    <property type="evidence" value="ECO:0000266"/>
    <property type="project" value="RGD"/>
</dbReference>
<dbReference type="GO" id="GO:0051020">
    <property type="term" value="F:GTPase binding"/>
    <property type="evidence" value="ECO:0000353"/>
    <property type="project" value="RGD"/>
</dbReference>
<dbReference type="GO" id="GO:0004407">
    <property type="term" value="F:histone deacetylase activity"/>
    <property type="evidence" value="ECO:0000266"/>
    <property type="project" value="RGD"/>
</dbReference>
<dbReference type="GO" id="GO:0141221">
    <property type="term" value="F:histone deacetylase activity, hydrolytic mechanism"/>
    <property type="evidence" value="ECO:0007669"/>
    <property type="project" value="UniProtKB-EC"/>
</dbReference>
<dbReference type="GO" id="GO:0042826">
    <property type="term" value="F:histone deacetylase binding"/>
    <property type="evidence" value="ECO:0000266"/>
    <property type="project" value="RGD"/>
</dbReference>
<dbReference type="GO" id="GO:0160009">
    <property type="term" value="F:histone decrotonylase activity"/>
    <property type="evidence" value="ECO:0000250"/>
    <property type="project" value="UniProtKB"/>
</dbReference>
<dbReference type="GO" id="GO:0046872">
    <property type="term" value="F:metal ion binding"/>
    <property type="evidence" value="ECO:0007669"/>
    <property type="project" value="UniProtKB-KW"/>
</dbReference>
<dbReference type="GO" id="GO:0051059">
    <property type="term" value="F:NF-kappaB binding"/>
    <property type="evidence" value="ECO:0000266"/>
    <property type="project" value="RGD"/>
</dbReference>
<dbReference type="GO" id="GO:0160010">
    <property type="term" value="F:protein de-2-hydroxyisobutyrylase activity"/>
    <property type="evidence" value="ECO:0000250"/>
    <property type="project" value="UniProtKB"/>
</dbReference>
<dbReference type="GO" id="GO:0160008">
    <property type="term" value="F:protein decrotonylase activity"/>
    <property type="evidence" value="ECO:0000250"/>
    <property type="project" value="UniProtKB"/>
</dbReference>
<dbReference type="GO" id="GO:0033558">
    <property type="term" value="F:protein lysine deacetylase activity"/>
    <property type="evidence" value="ECO:0000266"/>
    <property type="project" value="RGD"/>
</dbReference>
<dbReference type="GO" id="GO:0160216">
    <property type="term" value="F:protein lysine delactylase activity"/>
    <property type="evidence" value="ECO:0000250"/>
    <property type="project" value="UniProtKB"/>
</dbReference>
<dbReference type="GO" id="GO:0003714">
    <property type="term" value="F:transcription corepressor activity"/>
    <property type="evidence" value="ECO:0000250"/>
    <property type="project" value="UniProtKB"/>
</dbReference>
<dbReference type="GO" id="GO:0001222">
    <property type="term" value="F:transcription corepressor binding"/>
    <property type="evidence" value="ECO:0000353"/>
    <property type="project" value="RGD"/>
</dbReference>
<dbReference type="GO" id="GO:1990381">
    <property type="term" value="F:ubiquitin-specific protease binding"/>
    <property type="evidence" value="ECO:0000353"/>
    <property type="project" value="RGD"/>
</dbReference>
<dbReference type="GO" id="GO:0071498">
    <property type="term" value="P:cellular response to fluid shear stress"/>
    <property type="evidence" value="ECO:0000250"/>
    <property type="project" value="UniProtKB"/>
</dbReference>
<dbReference type="GO" id="GO:0071260">
    <property type="term" value="P:cellular response to mechanical stimulus"/>
    <property type="evidence" value="ECO:0000270"/>
    <property type="project" value="RGD"/>
</dbReference>
<dbReference type="GO" id="GO:0071374">
    <property type="term" value="P:cellular response to parathyroid hormone stimulus"/>
    <property type="evidence" value="ECO:0000270"/>
    <property type="project" value="RGD"/>
</dbReference>
<dbReference type="GO" id="GO:0032922">
    <property type="term" value="P:circadian regulation of gene expression"/>
    <property type="evidence" value="ECO:0000250"/>
    <property type="project" value="UniProtKB"/>
</dbReference>
<dbReference type="GO" id="GO:1903575">
    <property type="term" value="P:cornified envelope assembly"/>
    <property type="evidence" value="ECO:0000266"/>
    <property type="project" value="RGD"/>
</dbReference>
<dbReference type="GO" id="GO:0140861">
    <property type="term" value="P:DNA repair-dependent chromatin remodeling"/>
    <property type="evidence" value="ECO:0000266"/>
    <property type="project" value="RGD"/>
</dbReference>
<dbReference type="GO" id="GO:0008544">
    <property type="term" value="P:epidermis development"/>
    <property type="evidence" value="ECO:0000266"/>
    <property type="project" value="RGD"/>
</dbReference>
<dbReference type="GO" id="GO:0040029">
    <property type="term" value="P:epigenetic regulation of gene expression"/>
    <property type="evidence" value="ECO:0000318"/>
    <property type="project" value="GO_Central"/>
</dbReference>
<dbReference type="GO" id="GO:0000132">
    <property type="term" value="P:establishment of mitotic spindle orientation"/>
    <property type="evidence" value="ECO:0000266"/>
    <property type="project" value="RGD"/>
</dbReference>
<dbReference type="GO" id="GO:0061436">
    <property type="term" value="P:establishment of skin barrier"/>
    <property type="evidence" value="ECO:0000266"/>
    <property type="project" value="RGD"/>
</dbReference>
<dbReference type="GO" id="GO:0010467">
    <property type="term" value="P:gene expression"/>
    <property type="evidence" value="ECO:0000266"/>
    <property type="project" value="RGD"/>
</dbReference>
<dbReference type="GO" id="GO:0001701">
    <property type="term" value="P:in utero embryonic development"/>
    <property type="evidence" value="ECO:0000266"/>
    <property type="project" value="RGD"/>
</dbReference>
<dbReference type="GO" id="GO:2000726">
    <property type="term" value="P:negative regulation of cardiac muscle cell differentiation"/>
    <property type="evidence" value="ECO:0000266"/>
    <property type="project" value="RGD"/>
</dbReference>
<dbReference type="GO" id="GO:0045892">
    <property type="term" value="P:negative regulation of DNA-templated transcription"/>
    <property type="evidence" value="ECO:0000266"/>
    <property type="project" value="RGD"/>
</dbReference>
<dbReference type="GO" id="GO:0032692">
    <property type="term" value="P:negative regulation of interleukin-1 production"/>
    <property type="evidence" value="ECO:0000315"/>
    <property type="project" value="RGD"/>
</dbReference>
<dbReference type="GO" id="GO:0046329">
    <property type="term" value="P:negative regulation of JNK cascade"/>
    <property type="evidence" value="ECO:0000266"/>
    <property type="project" value="RGD"/>
</dbReference>
<dbReference type="GO" id="GO:0046826">
    <property type="term" value="P:negative regulation of protein export from nucleus"/>
    <property type="evidence" value="ECO:0000315"/>
    <property type="project" value="RGD"/>
</dbReference>
<dbReference type="GO" id="GO:0000122">
    <property type="term" value="P:negative regulation of transcription by RNA polymerase II"/>
    <property type="evidence" value="ECO:0000250"/>
    <property type="project" value="UniProtKB"/>
</dbReference>
<dbReference type="GO" id="GO:0032720">
    <property type="term" value="P:negative regulation of tumor necrosis factor production"/>
    <property type="evidence" value="ECO:0000315"/>
    <property type="project" value="RGD"/>
</dbReference>
<dbReference type="GO" id="GO:0061351">
    <property type="term" value="P:neural precursor cell proliferation"/>
    <property type="evidence" value="ECO:0000266"/>
    <property type="project" value="RGD"/>
</dbReference>
<dbReference type="GO" id="GO:0120162">
    <property type="term" value="P:positive regulation of cold-induced thermogenesis"/>
    <property type="evidence" value="ECO:0000250"/>
    <property type="project" value="YuBioLab"/>
</dbReference>
<dbReference type="GO" id="GO:0043525">
    <property type="term" value="P:positive regulation of neuron apoptotic process"/>
    <property type="evidence" value="ECO:0000315"/>
    <property type="project" value="RGD"/>
</dbReference>
<dbReference type="GO" id="GO:0042307">
    <property type="term" value="P:positive regulation of protein import into nucleus"/>
    <property type="evidence" value="ECO:0000250"/>
    <property type="project" value="UniProtKB"/>
</dbReference>
<dbReference type="GO" id="GO:0001934">
    <property type="term" value="P:positive regulation of protein phosphorylation"/>
    <property type="evidence" value="ECO:0000250"/>
    <property type="project" value="UniProtKB"/>
</dbReference>
<dbReference type="GO" id="GO:0031398">
    <property type="term" value="P:positive regulation of protein ubiquitination"/>
    <property type="evidence" value="ECO:0000250"/>
    <property type="project" value="UniProtKB"/>
</dbReference>
<dbReference type="GO" id="GO:0032008">
    <property type="term" value="P:positive regulation of TOR signaling"/>
    <property type="evidence" value="ECO:0000250"/>
    <property type="project" value="UniProtKB"/>
</dbReference>
<dbReference type="GO" id="GO:0045944">
    <property type="term" value="P:positive regulation of transcription by RNA polymerase II"/>
    <property type="evidence" value="ECO:0000250"/>
    <property type="project" value="UniProtKB"/>
</dbReference>
<dbReference type="GO" id="GO:2000676">
    <property type="term" value="P:positive regulation of type B pancreatic cell apoptotic process"/>
    <property type="evidence" value="ECO:0000315"/>
    <property type="project" value="RGD"/>
</dbReference>
<dbReference type="GO" id="GO:0036211">
    <property type="term" value="P:protein modification process"/>
    <property type="evidence" value="ECO:0000314"/>
    <property type="project" value="RGD"/>
</dbReference>
<dbReference type="GO" id="GO:0060816">
    <property type="term" value="P:random inactivation of X chromosome"/>
    <property type="evidence" value="ECO:0000266"/>
    <property type="project" value="RGD"/>
</dbReference>
<dbReference type="GO" id="GO:0042752">
    <property type="term" value="P:regulation of circadian rhythm"/>
    <property type="evidence" value="ECO:0000250"/>
    <property type="project" value="UniProtKB"/>
</dbReference>
<dbReference type="GO" id="GO:0007346">
    <property type="term" value="P:regulation of mitotic cell cycle"/>
    <property type="evidence" value="ECO:0000266"/>
    <property type="project" value="RGD"/>
</dbReference>
<dbReference type="GO" id="GO:0040014">
    <property type="term" value="P:regulation of multicellular organism growth"/>
    <property type="evidence" value="ECO:0000266"/>
    <property type="project" value="RGD"/>
</dbReference>
<dbReference type="GO" id="GO:0031647">
    <property type="term" value="P:regulation of protein stability"/>
    <property type="evidence" value="ECO:0000250"/>
    <property type="project" value="UniProtKB"/>
</dbReference>
<dbReference type="GO" id="GO:0071548">
    <property type="term" value="P:response to dexamethasone"/>
    <property type="evidence" value="ECO:0000270"/>
    <property type="project" value="RGD"/>
</dbReference>
<dbReference type="GO" id="GO:0031667">
    <property type="term" value="P:response to nutrient levels"/>
    <property type="evidence" value="ECO:0000270"/>
    <property type="project" value="RGD"/>
</dbReference>
<dbReference type="GO" id="GO:0009410">
    <property type="term" value="P:response to xenobiotic stimulus"/>
    <property type="evidence" value="ECO:0000270"/>
    <property type="project" value="RGD"/>
</dbReference>
<dbReference type="GO" id="GO:0051225">
    <property type="term" value="P:spindle assembly"/>
    <property type="evidence" value="ECO:0000266"/>
    <property type="project" value="RGD"/>
</dbReference>
<dbReference type="GO" id="GO:0006366">
    <property type="term" value="P:transcription by RNA polymerase II"/>
    <property type="evidence" value="ECO:0000266"/>
    <property type="project" value="RGD"/>
</dbReference>
<dbReference type="CDD" id="cd10005">
    <property type="entry name" value="HDAC3"/>
    <property type="match status" value="1"/>
</dbReference>
<dbReference type="FunFam" id="3.40.800.20:FF:000004">
    <property type="entry name" value="Histone deacetylase"/>
    <property type="match status" value="1"/>
</dbReference>
<dbReference type="Gene3D" id="3.40.800.20">
    <property type="entry name" value="Histone deacetylase domain"/>
    <property type="match status" value="1"/>
</dbReference>
<dbReference type="InterPro" id="IPR050284">
    <property type="entry name" value="HDAC_PDAC"/>
</dbReference>
<dbReference type="InterPro" id="IPR000286">
    <property type="entry name" value="His_deacetylse"/>
</dbReference>
<dbReference type="InterPro" id="IPR003084">
    <property type="entry name" value="His_deacetylse_1"/>
</dbReference>
<dbReference type="InterPro" id="IPR023801">
    <property type="entry name" value="His_deacetylse_dom"/>
</dbReference>
<dbReference type="InterPro" id="IPR037138">
    <property type="entry name" value="His_deacetylse_dom_sf"/>
</dbReference>
<dbReference type="InterPro" id="IPR023696">
    <property type="entry name" value="Ureohydrolase_dom_sf"/>
</dbReference>
<dbReference type="PANTHER" id="PTHR10625:SF36">
    <property type="entry name" value="HISTONE DEACETYLASE 3"/>
    <property type="match status" value="1"/>
</dbReference>
<dbReference type="PANTHER" id="PTHR10625">
    <property type="entry name" value="HISTONE DEACETYLASE HDAC1-RELATED"/>
    <property type="match status" value="1"/>
</dbReference>
<dbReference type="Pfam" id="PF00850">
    <property type="entry name" value="Hist_deacetyl"/>
    <property type="match status" value="1"/>
</dbReference>
<dbReference type="PIRSF" id="PIRSF037913">
    <property type="entry name" value="His_deacetylse_1"/>
    <property type="match status" value="1"/>
</dbReference>
<dbReference type="PRINTS" id="PR01270">
    <property type="entry name" value="HDASUPER"/>
</dbReference>
<dbReference type="PRINTS" id="PR01271">
    <property type="entry name" value="HISDACETLASE"/>
</dbReference>
<dbReference type="SUPFAM" id="SSF52768">
    <property type="entry name" value="Arginase/deacetylase"/>
    <property type="match status" value="1"/>
</dbReference>
<reference key="1">
    <citation type="submission" date="2000-11" db="EMBL/GenBank/DDBJ databases">
        <title>Expression pattern of rat histone deacetylases.</title>
        <authorList>
            <person name="Wilquet V."/>
            <person name="Chavez M."/>
            <person name="Korbers R."/>
            <person name="Geerts A."/>
        </authorList>
    </citation>
    <scope>NUCLEOTIDE SEQUENCE [MRNA]</scope>
    <source>
        <strain>Wistar</strain>
        <tissue>Testis</tissue>
    </source>
</reference>
<reference key="2">
    <citation type="journal article" date="2004" name="Genome Res.">
        <title>The status, quality, and expansion of the NIH full-length cDNA project: the Mammalian Gene Collection (MGC).</title>
        <authorList>
            <consortium name="The MGC Project Team"/>
        </authorList>
    </citation>
    <scope>NUCLEOTIDE SEQUENCE [LARGE SCALE MRNA]</scope>
    <source>
        <tissue>Prostate</tissue>
    </source>
</reference>
<reference key="3">
    <citation type="journal article" date="2005" name="J. Neurochem.">
        <title>The POZ/BTB protein NAC1 interacts with two different histone deacetylases in neuronal-like cultures.</title>
        <authorList>
            <person name="Korutla L."/>
            <person name="Wang P.J."/>
            <person name="Mackler S.A."/>
        </authorList>
    </citation>
    <scope>INTERACTION WITH BTBD14B</scope>
</reference>
<reference key="4">
    <citation type="journal article" date="2012" name="Nat. Commun.">
        <title>Quantitative maps of protein phosphorylation sites across 14 different rat organs and tissues.</title>
        <authorList>
            <person name="Lundby A."/>
            <person name="Secher A."/>
            <person name="Lage K."/>
            <person name="Nordsborg N.B."/>
            <person name="Dmytriyev A."/>
            <person name="Lundby C."/>
            <person name="Olsen J.V."/>
        </authorList>
    </citation>
    <scope>PHOSPHORYLATION [LARGE SCALE ANALYSIS] AT SER-424</scope>
    <scope>IDENTIFICATION BY MASS SPECTROMETRY [LARGE SCALE ANALYSIS]</scope>
</reference>
<evidence type="ECO:0000250" key="1">
    <source>
        <dbReference type="UniProtKB" id="O15379"/>
    </source>
</evidence>
<evidence type="ECO:0000250" key="2">
    <source>
        <dbReference type="UniProtKB" id="O88895"/>
    </source>
</evidence>
<evidence type="ECO:0000250" key="3">
    <source>
        <dbReference type="UniProtKB" id="Q13547"/>
    </source>
</evidence>
<evidence type="ECO:0000256" key="4">
    <source>
        <dbReference type="SAM" id="MobiDB-lite"/>
    </source>
</evidence>
<evidence type="ECO:0000269" key="5">
    <source>
    </source>
</evidence>
<evidence type="ECO:0000305" key="6"/>
<evidence type="ECO:0007744" key="7">
    <source>
    </source>
</evidence>
<comment type="function">
    <text evidence="1 2">Histone deacetylase that catalyzes the deacetylation of lysine residues on the N-terminal part of the core histones (H2A, H2B, H3 and H4), and some other non-histone substrates. Histone deacetylation gives a tag for epigenetic repression and plays an important role in transcriptional regulation, cell cycle progression and developmental events. Histone deacetylases act via the formation of large multiprotein complexes, such as N-Cor repressor complex, which activate the histone deacetylase activity. Participates in the BCL6 transcriptional repressor activity by deacetylating the H3 'Lys-27' (H3K27) on enhancer elements, antagonizing EP300 acetyltransferase activity and repressing proximal gene expression (By similarity). Acts as a molecular chaperone for shuttling phosphorylated NR2C1 to PML bodies for sumoylation (By similarity). Contributes, together with XBP1 isoform 1, to the activation of NFE2L2-mediated HMOX1 transcription factor gene expression in a PI(3)K/mTORC2/Akt-dependent signaling pathway leading to endothelial cell (EC) survival under disturbed flow/oxidative stress (By similarity). Regulates both the transcriptional activation and repression phases of the circadian clock in a deacetylase activity-independent manner. During the activation phase, promotes the accumulation of ubiquitinated BMAL1 at the E-boxes and during the repression phase, blocks FBXL3-mediated CRY1/2 ubiquitination and promotes the interaction of CRY1 and BMAL1. The NCOR1-HDAC3 complex regulates the circadian expression of the core clock gene BMAL1 and the genes involved in lipid metabolism in the liver (By similarity). Also functions as a deacetylase for non-histone targets, such as KAT5, MEF2D, MAPK14, RARA and STAT3. Serves as a corepressor of RARA, mediating its deacetylation and repression, leading to inhibition of RARE DNA element binding. In association with RARA, plays a role in the repression of microRNA-10a and thereby in the inflammatory response. In addition to protein deacetylase activity, also acts as a protein-lysine deacylase by recognizing other acyl groups: catalyzes removal of (2E)-butenoyl (crotonyl), lactoyl (lactyl) and 2-hydroxyisobutanoyl (2-hydroxyisobutyryl) acyl groups from lysine residues, leading to protein decrotonylation, delactylation and de-2-hydroxyisobutyrylation, respectively (By similarity). Catalyzes decrotonylation of MAPRE1/EB1 (By similarity). Mediates delactylation NBN/NBS1, thereby inhibiting DNA double-strand breaks (DSBs) via homologous recombination (HR) (By similarity).</text>
</comment>
<comment type="catalytic activity">
    <reaction evidence="1">
        <text>N(6)-acetyl-L-lysyl-[histone] + H2O = L-lysyl-[histone] + acetate</text>
        <dbReference type="Rhea" id="RHEA:58196"/>
        <dbReference type="Rhea" id="RHEA-COMP:9845"/>
        <dbReference type="Rhea" id="RHEA-COMP:11338"/>
        <dbReference type="ChEBI" id="CHEBI:15377"/>
        <dbReference type="ChEBI" id="CHEBI:29969"/>
        <dbReference type="ChEBI" id="CHEBI:30089"/>
        <dbReference type="ChEBI" id="CHEBI:61930"/>
        <dbReference type="EC" id="3.5.1.98"/>
    </reaction>
    <physiologicalReaction direction="left-to-right" evidence="1">
        <dbReference type="Rhea" id="RHEA:58197"/>
    </physiologicalReaction>
</comment>
<comment type="catalytic activity">
    <reaction evidence="1">
        <text>N(6)-acetyl-L-lysyl-[protein] + H2O = L-lysyl-[protein] + acetate</text>
        <dbReference type="Rhea" id="RHEA:58108"/>
        <dbReference type="Rhea" id="RHEA-COMP:9752"/>
        <dbReference type="Rhea" id="RHEA-COMP:10731"/>
        <dbReference type="ChEBI" id="CHEBI:15377"/>
        <dbReference type="ChEBI" id="CHEBI:29969"/>
        <dbReference type="ChEBI" id="CHEBI:30089"/>
        <dbReference type="ChEBI" id="CHEBI:61930"/>
    </reaction>
    <physiologicalReaction direction="left-to-right" evidence="1">
        <dbReference type="Rhea" id="RHEA:58109"/>
    </physiologicalReaction>
</comment>
<comment type="catalytic activity">
    <reaction evidence="1">
        <text>N(6)-(2E)-butenoyl-L-lysyl-[protein] + H2O = (2E)-2-butenoate + L-lysyl-[protein]</text>
        <dbReference type="Rhea" id="RHEA:69172"/>
        <dbReference type="Rhea" id="RHEA-COMP:9752"/>
        <dbReference type="Rhea" id="RHEA-COMP:13707"/>
        <dbReference type="ChEBI" id="CHEBI:15377"/>
        <dbReference type="ChEBI" id="CHEBI:29969"/>
        <dbReference type="ChEBI" id="CHEBI:35899"/>
        <dbReference type="ChEBI" id="CHEBI:137954"/>
    </reaction>
    <physiologicalReaction direction="left-to-right" evidence="1">
        <dbReference type="Rhea" id="RHEA:69173"/>
    </physiologicalReaction>
</comment>
<comment type="catalytic activity">
    <reaction evidence="1">
        <text>N(6)-(2-hydroxyisobutanoyl)-L-lysyl-[protein] + H2O = 2-hydroxy-2-methylpropanoate + L-lysyl-[protein]</text>
        <dbReference type="Rhea" id="RHEA:69176"/>
        <dbReference type="Rhea" id="RHEA-COMP:9752"/>
        <dbReference type="Rhea" id="RHEA-COMP:15921"/>
        <dbReference type="ChEBI" id="CHEBI:15377"/>
        <dbReference type="ChEBI" id="CHEBI:19641"/>
        <dbReference type="ChEBI" id="CHEBI:29969"/>
        <dbReference type="ChEBI" id="CHEBI:144968"/>
    </reaction>
    <physiologicalReaction direction="left-to-right" evidence="1">
        <dbReference type="Rhea" id="RHEA:69177"/>
    </physiologicalReaction>
</comment>
<comment type="catalytic activity">
    <reaction evidence="1">
        <text>N(6)-[(S)-lactoyl]-L-lysyl-[protein] + H2O = (S)-lactate + L-lysyl-[protein]</text>
        <dbReference type="Rhea" id="RHEA:81387"/>
        <dbReference type="Rhea" id="RHEA-COMP:9752"/>
        <dbReference type="Rhea" id="RHEA-COMP:19466"/>
        <dbReference type="ChEBI" id="CHEBI:15377"/>
        <dbReference type="ChEBI" id="CHEBI:16651"/>
        <dbReference type="ChEBI" id="CHEBI:29969"/>
        <dbReference type="ChEBI" id="CHEBI:231527"/>
    </reaction>
    <physiologicalReaction direction="left-to-right" evidence="1">
        <dbReference type="Rhea" id="RHEA:81388"/>
    </physiologicalReaction>
</comment>
<comment type="activity regulation">
    <text evidence="1">Inositol tetraphosphate (1D-myo-inositol 1,4,5,6-tetrakisphosphate) promotes the histone deacetylase activity by acting as an intermolecular glue between HDAC3 and NCOR2, thereby promoting its association with the N-Cor complex, a prerequisite for the histone deacetylase activity.</text>
</comment>
<comment type="subunit">
    <text evidence="1 2 5">Interacts with BTBD14B (PubMed:16033423). Interacts with HDAC7 and HDAC9. Interacts with HDAC10, DAXX and DACH1. Found in a complex with NCOR1 and NCOR2. Component of the N-Cor repressor complex, at least composed of NCOR1, NCOR2, HDAC3, TBL1X, TBL1R, CORO2A and GPS2. Interacts with BCOR, MJD2A/JHDM3A, NRIP1, PRDM6 and SRY. Interacts with GLIS2. Interacts (via the DNA-binding domain) with NR2C1; the interaction recruits phosphorylated NR2C1 to PML bodies for sumoylation. Component of the Notch corepressor complex. Interacts with CBFA2T3 and NKAP. Interacts with APEX1; the interaction is not dependent on the acetylated status of APEX1. Interacts with and deacetylates MAPK14. Interacts with ZMYND15. Interacts with SMRT/NCOR2 and BCL6 on DNA enhancer elements. Interacts with INSM1. Interacts with XBP1; the interaction occurs in endothelial cell (EC) under disturbed flow. Interacts (via C-terminus) with CCAR2 (via N-terminus). Interacts with and deacetylates MEF2D (By similarity). Interacts with BEND3 (By similarity). Interacts with NKAPL (By similarity). Interacts with DHX36; this interaction occurs in a RNA-dependent manner (By similarity). Interacts weakly with CRY1; this interaction is enhanced in the presence of FBXL3 (By similarity). Interacts with FBXL3 and BMAL1 (By similarity). Interacts with NCOR1 (By similarity). Interacts with RARA (By similarity). Interacts with SETD5 (By similarity).</text>
</comment>
<comment type="subcellular location">
    <subcellularLocation>
        <location evidence="1">Nucleus</location>
    </subcellularLocation>
    <subcellularLocation>
        <location evidence="1">Chromosome</location>
    </subcellularLocation>
    <subcellularLocation>
        <location evidence="1">Cytoplasm</location>
    </subcellularLocation>
    <subcellularLocation>
        <location evidence="1">Cytoplasm</location>
        <location evidence="1">Cytosol</location>
    </subcellularLocation>
    <text evidence="1">Colocalizes with XBP1 and AKT1 in the cytoplasm. Predominantly expressed in the nucleus in the presence of CCAR2.</text>
</comment>
<comment type="PTM">
    <text evidence="1">Deubiquitinated on 'Lys-63'-linked ubiquitin chains by USP38; leading to a decreased level of histone acetylation.</text>
</comment>
<comment type="PTM">
    <text evidence="1">Sumoylated in vitro.</text>
</comment>
<comment type="similarity">
    <text evidence="6">Belongs to the histone deacetylase family. HD type 1 subfamily.</text>
</comment>